<sequence>MPSFDIVSKMNEVDLRNAVDNAVREVSTRFDFRGVEATIELKDLTVTLRSESDFQVRQLEDLFRNHCSKRNLSTSGVEIEDEPVHSGKFYTLTMTFKQGIDQPTAKEIVKYIKDTKAKVQTSIQGDKVRVTGKKRDDLQETIALLKKSNIELPLQYENFRD</sequence>
<evidence type="ECO:0000255" key="1">
    <source>
        <dbReference type="HAMAP-Rule" id="MF_00632"/>
    </source>
</evidence>
<evidence type="ECO:0000305" key="2"/>
<feature type="chain" id="PRO_0000261946" description="Nucleotide-binding protein lpg1167">
    <location>
        <begin position="1"/>
        <end position="161"/>
    </location>
</feature>
<keyword id="KW-0547">Nucleotide-binding</keyword>
<keyword id="KW-1185">Reference proteome</keyword>
<proteinExistence type="inferred from homology"/>
<reference key="1">
    <citation type="journal article" date="2004" name="Science">
        <title>The genomic sequence of the accidental pathogen Legionella pneumophila.</title>
        <authorList>
            <person name="Chien M."/>
            <person name="Morozova I."/>
            <person name="Shi S."/>
            <person name="Sheng H."/>
            <person name="Chen J."/>
            <person name="Gomez S.M."/>
            <person name="Asamani G."/>
            <person name="Hill K."/>
            <person name="Nuara J."/>
            <person name="Feder M."/>
            <person name="Rineer J."/>
            <person name="Greenberg J.J."/>
            <person name="Steshenko V."/>
            <person name="Park S.H."/>
            <person name="Zhao B."/>
            <person name="Teplitskaya E."/>
            <person name="Edwards J.R."/>
            <person name="Pampou S."/>
            <person name="Georghiou A."/>
            <person name="Chou I.-C."/>
            <person name="Iannuccilli W."/>
            <person name="Ulz M.E."/>
            <person name="Kim D.H."/>
            <person name="Geringer-Sameth A."/>
            <person name="Goldsberry C."/>
            <person name="Morozov P."/>
            <person name="Fischer S.G."/>
            <person name="Segal G."/>
            <person name="Qu X."/>
            <person name="Rzhetsky A."/>
            <person name="Zhang P."/>
            <person name="Cayanis E."/>
            <person name="De Jong P.J."/>
            <person name="Ju J."/>
            <person name="Kalachikov S."/>
            <person name="Shuman H.A."/>
            <person name="Russo J.J."/>
        </authorList>
    </citation>
    <scope>NUCLEOTIDE SEQUENCE [LARGE SCALE GENOMIC DNA]</scope>
    <source>
        <strain>Philadelphia 1 / ATCC 33152 / DSM 7513</strain>
    </source>
</reference>
<dbReference type="EMBL" id="AE017354">
    <property type="protein sequence ID" value="AAU27253.1"/>
    <property type="status" value="ALT_INIT"/>
    <property type="molecule type" value="Genomic_DNA"/>
</dbReference>
<dbReference type="RefSeq" id="WP_010946901.1">
    <property type="nucleotide sequence ID" value="NC_002942.5"/>
</dbReference>
<dbReference type="RefSeq" id="YP_095200.2">
    <property type="nucleotide sequence ID" value="NC_002942.5"/>
</dbReference>
<dbReference type="SMR" id="Q5ZWB8"/>
<dbReference type="STRING" id="272624.lpg1167"/>
<dbReference type="PaxDb" id="272624-lpg1167"/>
<dbReference type="KEGG" id="lpn:lpg1167"/>
<dbReference type="PATRIC" id="fig|272624.6.peg.1229"/>
<dbReference type="eggNOG" id="COG1666">
    <property type="taxonomic scope" value="Bacteria"/>
</dbReference>
<dbReference type="HOGENOM" id="CLU_099839_1_0_6"/>
<dbReference type="OrthoDB" id="9801447at2"/>
<dbReference type="Proteomes" id="UP000000609">
    <property type="component" value="Chromosome"/>
</dbReference>
<dbReference type="GO" id="GO:0005829">
    <property type="term" value="C:cytosol"/>
    <property type="evidence" value="ECO:0007669"/>
    <property type="project" value="TreeGrafter"/>
</dbReference>
<dbReference type="GO" id="GO:0000166">
    <property type="term" value="F:nucleotide binding"/>
    <property type="evidence" value="ECO:0007669"/>
    <property type="project" value="TreeGrafter"/>
</dbReference>
<dbReference type="CDD" id="cd11740">
    <property type="entry name" value="YajQ_like"/>
    <property type="match status" value="1"/>
</dbReference>
<dbReference type="Gene3D" id="3.30.70.860">
    <property type="match status" value="1"/>
</dbReference>
<dbReference type="Gene3D" id="3.30.70.990">
    <property type="entry name" value="YajQ-like, domain 2"/>
    <property type="match status" value="1"/>
</dbReference>
<dbReference type="HAMAP" id="MF_00632">
    <property type="entry name" value="YajQ"/>
    <property type="match status" value="1"/>
</dbReference>
<dbReference type="InterPro" id="IPR007551">
    <property type="entry name" value="DUF520"/>
</dbReference>
<dbReference type="InterPro" id="IPR035571">
    <property type="entry name" value="UPF0234-like_C"/>
</dbReference>
<dbReference type="InterPro" id="IPR035570">
    <property type="entry name" value="UPF0234_N"/>
</dbReference>
<dbReference type="InterPro" id="IPR036183">
    <property type="entry name" value="YajQ-like_sf"/>
</dbReference>
<dbReference type="NCBIfam" id="NF003819">
    <property type="entry name" value="PRK05412.1"/>
    <property type="match status" value="1"/>
</dbReference>
<dbReference type="PANTHER" id="PTHR30476">
    <property type="entry name" value="UPF0234 PROTEIN YAJQ"/>
    <property type="match status" value="1"/>
</dbReference>
<dbReference type="PANTHER" id="PTHR30476:SF0">
    <property type="entry name" value="UPF0234 PROTEIN YAJQ"/>
    <property type="match status" value="1"/>
</dbReference>
<dbReference type="Pfam" id="PF04461">
    <property type="entry name" value="DUF520"/>
    <property type="match status" value="1"/>
</dbReference>
<dbReference type="SUPFAM" id="SSF89963">
    <property type="entry name" value="YajQ-like"/>
    <property type="match status" value="2"/>
</dbReference>
<protein>
    <recommendedName>
        <fullName evidence="1">Nucleotide-binding protein lpg1167</fullName>
    </recommendedName>
</protein>
<name>Y1167_LEGPH</name>
<comment type="function">
    <text evidence="1">Nucleotide-binding protein.</text>
</comment>
<comment type="similarity">
    <text evidence="1">Belongs to the YajQ family.</text>
</comment>
<comment type="sequence caution" evidence="2">
    <conflict type="erroneous initiation">
        <sequence resource="EMBL-CDS" id="AAU27253"/>
    </conflict>
</comment>
<gene>
    <name type="ordered locus">lpg1167</name>
</gene>
<organism>
    <name type="scientific">Legionella pneumophila subsp. pneumophila (strain Philadelphia 1 / ATCC 33152 / DSM 7513)</name>
    <dbReference type="NCBI Taxonomy" id="272624"/>
    <lineage>
        <taxon>Bacteria</taxon>
        <taxon>Pseudomonadati</taxon>
        <taxon>Pseudomonadota</taxon>
        <taxon>Gammaproteobacteria</taxon>
        <taxon>Legionellales</taxon>
        <taxon>Legionellaceae</taxon>
        <taxon>Legionella</taxon>
    </lineage>
</organism>
<accession>Q5ZWB8</accession>